<accession>B2J4E5</accession>
<reference key="1">
    <citation type="journal article" date="2013" name="Plant Physiol.">
        <title>A Nostoc punctiforme Sugar Transporter Necessary to Establish a Cyanobacterium-Plant Symbiosis.</title>
        <authorList>
            <person name="Ekman M."/>
            <person name="Picossi S."/>
            <person name="Campbell E.L."/>
            <person name="Meeks J.C."/>
            <person name="Flores E."/>
        </authorList>
    </citation>
    <scope>NUCLEOTIDE SEQUENCE [LARGE SCALE GENOMIC DNA]</scope>
    <source>
        <strain>ATCC 29133 / PCC 73102</strain>
    </source>
</reference>
<reference key="2">
    <citation type="journal article" date="2015" name="Biochem. J.">
        <title>A directed-overflow and damage-control N-glycosidase in riboflavin biosynthesis.</title>
        <authorList>
            <person name="Frelin O."/>
            <person name="Huang L."/>
            <person name="Hasnain G."/>
            <person name="Jeffryes J.G."/>
            <person name="Ziemak M.J."/>
            <person name="Rocca J.R."/>
            <person name="Wang B."/>
            <person name="Rice J."/>
            <person name="Roje S."/>
            <person name="Yurgel S.N."/>
            <person name="Gregory J.F. III"/>
            <person name="Edison A.S."/>
            <person name="Henry C.S."/>
            <person name="de Crecy-Lagard V."/>
            <person name="Hanson A.D."/>
        </authorList>
    </citation>
    <scope>FUNCTION</scope>
    <scope>CATALYTIC ACTIVITY</scope>
    <scope>SUBSTRATE SPECIFICITY</scope>
</reference>
<dbReference type="EC" id="3.2.2.-" evidence="1"/>
<dbReference type="EMBL" id="CP001037">
    <property type="protein sequence ID" value="ACC83635.1"/>
    <property type="molecule type" value="Genomic_DNA"/>
</dbReference>
<dbReference type="RefSeq" id="WP_012411586.1">
    <property type="nucleotide sequence ID" value="NC_010628.1"/>
</dbReference>
<dbReference type="SMR" id="B2J4E5"/>
<dbReference type="STRING" id="63737.Npun_R5314"/>
<dbReference type="EnsemblBacteria" id="ACC83635">
    <property type="protein sequence ID" value="ACC83635"/>
    <property type="gene ID" value="Npun_R5314"/>
</dbReference>
<dbReference type="KEGG" id="npu:Npun_R5314"/>
<dbReference type="eggNOG" id="COG3236">
    <property type="taxonomic scope" value="Bacteria"/>
</dbReference>
<dbReference type="HOGENOM" id="CLU_084247_3_1_3"/>
<dbReference type="OrthoDB" id="67297at2"/>
<dbReference type="PhylomeDB" id="B2J4E5"/>
<dbReference type="Proteomes" id="UP000001191">
    <property type="component" value="Chromosome"/>
</dbReference>
<dbReference type="GO" id="GO:0016799">
    <property type="term" value="F:hydrolase activity, hydrolyzing N-glycosyl compounds"/>
    <property type="evidence" value="ECO:0000314"/>
    <property type="project" value="UniProtKB"/>
</dbReference>
<dbReference type="GO" id="GO:1901135">
    <property type="term" value="P:carbohydrate derivative metabolic process"/>
    <property type="evidence" value="ECO:0000314"/>
    <property type="project" value="UniProtKB"/>
</dbReference>
<dbReference type="CDD" id="cd15457">
    <property type="entry name" value="NADAR"/>
    <property type="match status" value="1"/>
</dbReference>
<dbReference type="FunFam" id="1.10.357.40:FF:000001">
    <property type="entry name" value="Swarming motility protein ybiA"/>
    <property type="match status" value="1"/>
</dbReference>
<dbReference type="Gene3D" id="1.10.357.40">
    <property type="entry name" value="YbiA-like"/>
    <property type="match status" value="1"/>
</dbReference>
<dbReference type="InterPro" id="IPR012816">
    <property type="entry name" value="NADAR"/>
</dbReference>
<dbReference type="InterPro" id="IPR037238">
    <property type="entry name" value="YbiA-like_sf"/>
</dbReference>
<dbReference type="NCBIfam" id="TIGR02464">
    <property type="entry name" value="ribofla_fusion"/>
    <property type="match status" value="1"/>
</dbReference>
<dbReference type="Pfam" id="PF08719">
    <property type="entry name" value="NADAR"/>
    <property type="match status" value="1"/>
</dbReference>
<dbReference type="SUPFAM" id="SSF143990">
    <property type="entry name" value="YbiA-like"/>
    <property type="match status" value="1"/>
</dbReference>
<protein>
    <recommendedName>
        <fullName evidence="3">N-glycosidase Npun_R5314</fullName>
        <ecNumber evidence="1">3.2.2.-</ecNumber>
    </recommendedName>
    <alternativeName>
        <fullName evidence="3">Riboflavin biosynthesis intermediates N-glycosidase</fullName>
    </alternativeName>
</protein>
<proteinExistence type="evidence at protein level"/>
<sequence length="156" mass="17748">MTIYFYKVWQPYGCFSNFSPHGIHIQDTYWATVEHYYQAQKFVGSKDAAIIPLIHAAATPEEAAALGRCSTRQLRRDWDLVKTQIMREAVLKKFLTHADIREVLLKTGDELLVENSPTDSFWGCGANKAGLNHLGKTLMSVREEIRNLLSLTGIYE</sequence>
<keyword id="KW-0326">Glycosidase</keyword>
<keyword id="KW-0378">Hydrolase</keyword>
<keyword id="KW-1185">Reference proteome</keyword>
<gene>
    <name evidence="4" type="ordered locus">Npun_R5314</name>
</gene>
<comment type="function">
    <text evidence="1">Catalyzes the hydrolysis of the N-glycosidic bond in the first two intermediates of riboflavin biosynthesis, which are highly reactive metabolites, yielding relatively innocuous products. Thus, can divert a surplus of harmful intermediates into relatively harmless products and pre-empt the damage these intermediates would otherwise do. May act on other substrates in vivo. Has no activity against GTP, nucleoside monophosphates or ADP-ribose.</text>
</comment>
<comment type="catalytic activity">
    <reaction evidence="1">
        <text>2,5-diamino-6-hydroxy-4-(5-phosphoribosylamino)-pyrimidine + H2O = 2,5,6-triamino-4-hydroxypyrimidine + D-ribose 5-phosphate</text>
        <dbReference type="Rhea" id="RHEA:23436"/>
        <dbReference type="ChEBI" id="CHEBI:15377"/>
        <dbReference type="ChEBI" id="CHEBI:58614"/>
        <dbReference type="ChEBI" id="CHEBI:78346"/>
        <dbReference type="ChEBI" id="CHEBI:137796"/>
    </reaction>
</comment>
<comment type="catalytic activity">
    <reaction evidence="1">
        <text>5-amino-6-(5-phospho-D-ribosylamino)uracil + H2O = 5,6-diaminouracil + D-ribose 5-phosphate</text>
        <dbReference type="Rhea" id="RHEA:55020"/>
        <dbReference type="ChEBI" id="CHEBI:15377"/>
        <dbReference type="ChEBI" id="CHEBI:46252"/>
        <dbReference type="ChEBI" id="CHEBI:58453"/>
        <dbReference type="ChEBI" id="CHEBI:78346"/>
    </reaction>
</comment>
<comment type="similarity">
    <text evidence="2">Belongs to the YbiA family.</text>
</comment>
<evidence type="ECO:0000269" key="1">
    <source>
    </source>
</evidence>
<evidence type="ECO:0000305" key="2"/>
<evidence type="ECO:0000305" key="3">
    <source>
    </source>
</evidence>
<evidence type="ECO:0000312" key="4">
    <source>
        <dbReference type="EMBL" id="ACC83635.1"/>
    </source>
</evidence>
<organism>
    <name type="scientific">Nostoc punctiforme (strain ATCC 29133 / PCC 73102)</name>
    <dbReference type="NCBI Taxonomy" id="63737"/>
    <lineage>
        <taxon>Bacteria</taxon>
        <taxon>Bacillati</taxon>
        <taxon>Cyanobacteriota</taxon>
        <taxon>Cyanophyceae</taxon>
        <taxon>Nostocales</taxon>
        <taxon>Nostocaceae</taxon>
        <taxon>Nostoc</taxon>
    </lineage>
</organism>
<feature type="chain" id="PRO_0000433625" description="N-glycosidase Npun_R5314">
    <location>
        <begin position="1"/>
        <end position="156"/>
    </location>
</feature>
<name>RIBX_NOSP7</name>